<keyword id="KW-0169">Cobalamin biosynthesis</keyword>
<keyword id="KW-0328">Glycosyltransferase</keyword>
<keyword id="KW-0808">Transferase</keyword>
<sequence length="344" mass="37096">MNPNELIVKLQSKIDLKTKPPGSLGTLESLALQIGLIQNTDSPELKSPHILVFAGDHGLANSGVSAYPKEVTYQMVFNFLNGGAAINAFCKQNSIRLKVVDAGVDFSFSDDSTFLHPDFIDAKVGFGTKNILIESAMTKEECNQALEKGAFISTKKVSSNCNVIGFGEMGIGNTSSASLITASVLKKDLREVTGKGTGLNDQKFQKKITILEECLCKHQSSLRTPFEVLQTFGGFEIAMMIGAMIDSAKKGRIILVDGFIATSAFLIAHKMEPTILKNAVFCHKSVEPGHIHLLEEWNAKPLLDLGLRLGEGAGCAIAFPILLSAIAFLNDMASFESAKVDQKL</sequence>
<comment type="function">
    <text evidence="1">Catalyzes the synthesis of alpha-ribazole-5'-phosphate from nicotinate mononucleotide (NAMN) and 5,6-dimethylbenzimidazole (DMB).</text>
</comment>
<comment type="catalytic activity">
    <reaction evidence="1">
        <text>5,6-dimethylbenzimidazole + nicotinate beta-D-ribonucleotide = alpha-ribazole 5'-phosphate + nicotinate + H(+)</text>
        <dbReference type="Rhea" id="RHEA:11196"/>
        <dbReference type="ChEBI" id="CHEBI:15378"/>
        <dbReference type="ChEBI" id="CHEBI:15890"/>
        <dbReference type="ChEBI" id="CHEBI:32544"/>
        <dbReference type="ChEBI" id="CHEBI:57502"/>
        <dbReference type="ChEBI" id="CHEBI:57918"/>
        <dbReference type="EC" id="2.4.2.21"/>
    </reaction>
</comment>
<comment type="pathway">
    <text evidence="1">Nucleoside biosynthesis; alpha-ribazole biosynthesis; alpha-ribazole from 5,6-dimethylbenzimidazole: step 1/2.</text>
</comment>
<comment type="similarity">
    <text evidence="1">Belongs to the CobT family.</text>
</comment>
<protein>
    <recommendedName>
        <fullName evidence="1">Nicotinate-nucleotide--dimethylbenzimidazole phosphoribosyltransferase</fullName>
        <shortName evidence="1">NN:DBI PRT</shortName>
        <ecNumber evidence="1">2.4.2.21</ecNumber>
    </recommendedName>
    <alternativeName>
        <fullName evidence="1">N(1)-alpha-phosphoribosyltransferase</fullName>
    </alternativeName>
</protein>
<reference key="1">
    <citation type="journal article" date="2006" name="Proc. Natl. Acad. Sci. U.S.A.">
        <title>Genome reduction in Leptospira borgpetersenii reflects limited transmission potential.</title>
        <authorList>
            <person name="Bulach D.M."/>
            <person name="Zuerner R.L."/>
            <person name="Wilson P."/>
            <person name="Seemann T."/>
            <person name="McGrath A."/>
            <person name="Cullen P.A."/>
            <person name="Davis J."/>
            <person name="Johnson M."/>
            <person name="Kuczek E."/>
            <person name="Alt D.P."/>
            <person name="Peterson-Burch B."/>
            <person name="Coppel R.L."/>
            <person name="Rood J.I."/>
            <person name="Davies J.K."/>
            <person name="Adler B."/>
        </authorList>
    </citation>
    <scope>NUCLEOTIDE SEQUENCE [LARGE SCALE GENOMIC DNA]</scope>
    <source>
        <strain>JB197</strain>
    </source>
</reference>
<dbReference type="EC" id="2.4.2.21" evidence="1"/>
<dbReference type="EMBL" id="CP000350">
    <property type="protein sequence ID" value="ABJ77231.1"/>
    <property type="molecule type" value="Genomic_DNA"/>
</dbReference>
<dbReference type="RefSeq" id="WP_011669303.1">
    <property type="nucleotide sequence ID" value="NC_008510.1"/>
</dbReference>
<dbReference type="SMR" id="Q04PD9"/>
<dbReference type="KEGG" id="lbj:LBJ_2826"/>
<dbReference type="HOGENOM" id="CLU_002982_0_0_12"/>
<dbReference type="UniPathway" id="UPA00061">
    <property type="reaction ID" value="UER00516"/>
</dbReference>
<dbReference type="Proteomes" id="UP000000656">
    <property type="component" value="Chromosome 1"/>
</dbReference>
<dbReference type="GO" id="GO:0008939">
    <property type="term" value="F:nicotinate-nucleotide-dimethylbenzimidazole phosphoribosyltransferase activity"/>
    <property type="evidence" value="ECO:0007669"/>
    <property type="project" value="UniProtKB-UniRule"/>
</dbReference>
<dbReference type="GO" id="GO:0009236">
    <property type="term" value="P:cobalamin biosynthetic process"/>
    <property type="evidence" value="ECO:0007669"/>
    <property type="project" value="UniProtKB-KW"/>
</dbReference>
<dbReference type="CDD" id="cd02439">
    <property type="entry name" value="DMB-PRT_CobT"/>
    <property type="match status" value="1"/>
</dbReference>
<dbReference type="FunFam" id="3.40.50.10210:FF:000001">
    <property type="entry name" value="Nicotinate-nucleotide--dimethylbenzimidazole phosphoribosyltransferase"/>
    <property type="match status" value="1"/>
</dbReference>
<dbReference type="Gene3D" id="1.10.1610.10">
    <property type="match status" value="1"/>
</dbReference>
<dbReference type="Gene3D" id="3.40.50.10210">
    <property type="match status" value="1"/>
</dbReference>
<dbReference type="HAMAP" id="MF_00230">
    <property type="entry name" value="CobT"/>
    <property type="match status" value="1"/>
</dbReference>
<dbReference type="InterPro" id="IPR003200">
    <property type="entry name" value="Nict_dMeBzImd_PRibTrfase"/>
</dbReference>
<dbReference type="InterPro" id="IPR017846">
    <property type="entry name" value="Nict_dMeBzImd_PRibTrfase_bact"/>
</dbReference>
<dbReference type="InterPro" id="IPR023195">
    <property type="entry name" value="Nict_dMeBzImd_PRibTrfase_N"/>
</dbReference>
<dbReference type="InterPro" id="IPR036087">
    <property type="entry name" value="Nict_dMeBzImd_PRibTrfase_sf"/>
</dbReference>
<dbReference type="NCBIfam" id="TIGR03160">
    <property type="entry name" value="cobT_DBIPRT"/>
    <property type="match status" value="1"/>
</dbReference>
<dbReference type="NCBIfam" id="NF000996">
    <property type="entry name" value="PRK00105.1"/>
    <property type="match status" value="1"/>
</dbReference>
<dbReference type="PANTHER" id="PTHR43463">
    <property type="entry name" value="NICOTINATE-NUCLEOTIDE--DIMETHYLBENZIMIDAZOLE PHOSPHORIBOSYLTRANSFERASE"/>
    <property type="match status" value="1"/>
</dbReference>
<dbReference type="PANTHER" id="PTHR43463:SF1">
    <property type="entry name" value="NICOTINATE-NUCLEOTIDE--DIMETHYLBENZIMIDAZOLE PHOSPHORIBOSYLTRANSFERASE"/>
    <property type="match status" value="1"/>
</dbReference>
<dbReference type="Pfam" id="PF02277">
    <property type="entry name" value="DBI_PRT"/>
    <property type="match status" value="1"/>
</dbReference>
<dbReference type="SUPFAM" id="SSF52733">
    <property type="entry name" value="Nicotinate mononucleotide:5,6-dimethylbenzimidazole phosphoribosyltransferase (CobT)"/>
    <property type="match status" value="1"/>
</dbReference>
<gene>
    <name evidence="1" type="primary">cobT</name>
    <name type="ordered locus">LBJ_2826</name>
</gene>
<proteinExistence type="inferred from homology"/>
<name>COBT_LEPBJ</name>
<feature type="chain" id="PRO_1000021600" description="Nicotinate-nucleotide--dimethylbenzimidazole phosphoribosyltransferase">
    <location>
        <begin position="1"/>
        <end position="344"/>
    </location>
</feature>
<feature type="active site" description="Proton acceptor" evidence="1">
    <location>
        <position position="311"/>
    </location>
</feature>
<organism>
    <name type="scientific">Leptospira borgpetersenii serovar Hardjo-bovis (strain JB197)</name>
    <dbReference type="NCBI Taxonomy" id="355277"/>
    <lineage>
        <taxon>Bacteria</taxon>
        <taxon>Pseudomonadati</taxon>
        <taxon>Spirochaetota</taxon>
        <taxon>Spirochaetia</taxon>
        <taxon>Leptospirales</taxon>
        <taxon>Leptospiraceae</taxon>
        <taxon>Leptospira</taxon>
    </lineage>
</organism>
<evidence type="ECO:0000255" key="1">
    <source>
        <dbReference type="HAMAP-Rule" id="MF_00230"/>
    </source>
</evidence>
<accession>Q04PD9</accession>